<accession>Q8Z801</accession>
<comment type="function">
    <text evidence="1">Transfers the gamma-phosphate of ATP to the 4'-position of a tetraacyldisaccharide 1-phosphate intermediate (termed DS-1-P) to form tetraacyldisaccharide 1,4'-bis-phosphate (lipid IVA).</text>
</comment>
<comment type="catalytic activity">
    <reaction evidence="1">
        <text>a lipid A disaccharide + ATP = a lipid IVA + ADP + H(+)</text>
        <dbReference type="Rhea" id="RHEA:67840"/>
        <dbReference type="ChEBI" id="CHEBI:15378"/>
        <dbReference type="ChEBI" id="CHEBI:30616"/>
        <dbReference type="ChEBI" id="CHEBI:176343"/>
        <dbReference type="ChEBI" id="CHEBI:176425"/>
        <dbReference type="ChEBI" id="CHEBI:456216"/>
        <dbReference type="EC" id="2.7.1.130"/>
    </reaction>
</comment>
<comment type="pathway">
    <text evidence="1">Glycolipid biosynthesis; lipid IV(A) biosynthesis; lipid IV(A) from (3R)-3-hydroxytetradecanoyl-[acyl-carrier-protein] and UDP-N-acetyl-alpha-D-glucosamine: step 6/6.</text>
</comment>
<comment type="similarity">
    <text evidence="1">Belongs to the LpxK family.</text>
</comment>
<feature type="chain" id="PRO_0000190949" description="Tetraacyldisaccharide 4'-kinase">
    <location>
        <begin position="1"/>
        <end position="325"/>
    </location>
</feature>
<feature type="binding site" evidence="1">
    <location>
        <begin position="55"/>
        <end position="62"/>
    </location>
    <ligand>
        <name>ATP</name>
        <dbReference type="ChEBI" id="CHEBI:30616"/>
    </ligand>
</feature>
<gene>
    <name evidence="1" type="primary">lpxK</name>
    <name type="ordered locus">STY0986</name>
    <name type="ordered locus">t1949</name>
</gene>
<reference key="1">
    <citation type="journal article" date="2001" name="Nature">
        <title>Complete genome sequence of a multiple drug resistant Salmonella enterica serovar Typhi CT18.</title>
        <authorList>
            <person name="Parkhill J."/>
            <person name="Dougan G."/>
            <person name="James K.D."/>
            <person name="Thomson N.R."/>
            <person name="Pickard D."/>
            <person name="Wain J."/>
            <person name="Churcher C.M."/>
            <person name="Mungall K.L."/>
            <person name="Bentley S.D."/>
            <person name="Holden M.T.G."/>
            <person name="Sebaihia M."/>
            <person name="Baker S."/>
            <person name="Basham D."/>
            <person name="Brooks K."/>
            <person name="Chillingworth T."/>
            <person name="Connerton P."/>
            <person name="Cronin A."/>
            <person name="Davis P."/>
            <person name="Davies R.M."/>
            <person name="Dowd L."/>
            <person name="White N."/>
            <person name="Farrar J."/>
            <person name="Feltwell T."/>
            <person name="Hamlin N."/>
            <person name="Haque A."/>
            <person name="Hien T.T."/>
            <person name="Holroyd S."/>
            <person name="Jagels K."/>
            <person name="Krogh A."/>
            <person name="Larsen T.S."/>
            <person name="Leather S."/>
            <person name="Moule S."/>
            <person name="O'Gaora P."/>
            <person name="Parry C."/>
            <person name="Quail M.A."/>
            <person name="Rutherford K.M."/>
            <person name="Simmonds M."/>
            <person name="Skelton J."/>
            <person name="Stevens K."/>
            <person name="Whitehead S."/>
            <person name="Barrell B.G."/>
        </authorList>
    </citation>
    <scope>NUCLEOTIDE SEQUENCE [LARGE SCALE GENOMIC DNA]</scope>
    <source>
        <strain>CT18</strain>
    </source>
</reference>
<reference key="2">
    <citation type="journal article" date="2003" name="J. Bacteriol.">
        <title>Comparative genomics of Salmonella enterica serovar Typhi strains Ty2 and CT18.</title>
        <authorList>
            <person name="Deng W."/>
            <person name="Liou S.-R."/>
            <person name="Plunkett G. III"/>
            <person name="Mayhew G.F."/>
            <person name="Rose D.J."/>
            <person name="Burland V."/>
            <person name="Kodoyianni V."/>
            <person name="Schwartz D.C."/>
            <person name="Blattner F.R."/>
        </authorList>
    </citation>
    <scope>NUCLEOTIDE SEQUENCE [LARGE SCALE GENOMIC DNA]</scope>
    <source>
        <strain>ATCC 700931 / Ty2</strain>
    </source>
</reference>
<name>LPXK_SALTI</name>
<organism>
    <name type="scientific">Salmonella typhi</name>
    <dbReference type="NCBI Taxonomy" id="90370"/>
    <lineage>
        <taxon>Bacteria</taxon>
        <taxon>Pseudomonadati</taxon>
        <taxon>Pseudomonadota</taxon>
        <taxon>Gammaproteobacteria</taxon>
        <taxon>Enterobacterales</taxon>
        <taxon>Enterobacteriaceae</taxon>
        <taxon>Salmonella</taxon>
    </lineage>
</organism>
<dbReference type="EC" id="2.7.1.130" evidence="1"/>
<dbReference type="EMBL" id="AL513382">
    <property type="protein sequence ID" value="CAD05385.1"/>
    <property type="molecule type" value="Genomic_DNA"/>
</dbReference>
<dbReference type="EMBL" id="AE014613">
    <property type="protein sequence ID" value="AAO69563.1"/>
    <property type="molecule type" value="Genomic_DNA"/>
</dbReference>
<dbReference type="RefSeq" id="NP_455472.1">
    <property type="nucleotide sequence ID" value="NC_003198.1"/>
</dbReference>
<dbReference type="RefSeq" id="WP_000561698.1">
    <property type="nucleotide sequence ID" value="NZ_WSUR01000013.1"/>
</dbReference>
<dbReference type="SMR" id="Q8Z801"/>
<dbReference type="STRING" id="220341.gene:17584976"/>
<dbReference type="KEGG" id="stt:t1949"/>
<dbReference type="KEGG" id="sty:STY0986"/>
<dbReference type="PATRIC" id="fig|220341.7.peg.994"/>
<dbReference type="eggNOG" id="COG1663">
    <property type="taxonomic scope" value="Bacteria"/>
</dbReference>
<dbReference type="HOGENOM" id="CLU_038816_2_0_6"/>
<dbReference type="OMA" id="RAFPDHH"/>
<dbReference type="OrthoDB" id="9766423at2"/>
<dbReference type="UniPathway" id="UPA00359">
    <property type="reaction ID" value="UER00482"/>
</dbReference>
<dbReference type="Proteomes" id="UP000000541">
    <property type="component" value="Chromosome"/>
</dbReference>
<dbReference type="Proteomes" id="UP000002670">
    <property type="component" value="Chromosome"/>
</dbReference>
<dbReference type="GO" id="GO:0005886">
    <property type="term" value="C:plasma membrane"/>
    <property type="evidence" value="ECO:0007669"/>
    <property type="project" value="TreeGrafter"/>
</dbReference>
<dbReference type="GO" id="GO:0005524">
    <property type="term" value="F:ATP binding"/>
    <property type="evidence" value="ECO:0007669"/>
    <property type="project" value="UniProtKB-UniRule"/>
</dbReference>
<dbReference type="GO" id="GO:0009029">
    <property type="term" value="F:tetraacyldisaccharide 4'-kinase activity"/>
    <property type="evidence" value="ECO:0007669"/>
    <property type="project" value="UniProtKB-UniRule"/>
</dbReference>
<dbReference type="GO" id="GO:0009245">
    <property type="term" value="P:lipid A biosynthetic process"/>
    <property type="evidence" value="ECO:0007669"/>
    <property type="project" value="UniProtKB-UniRule"/>
</dbReference>
<dbReference type="GO" id="GO:0009244">
    <property type="term" value="P:lipopolysaccharide core region biosynthetic process"/>
    <property type="evidence" value="ECO:0007669"/>
    <property type="project" value="TreeGrafter"/>
</dbReference>
<dbReference type="HAMAP" id="MF_00409">
    <property type="entry name" value="LpxK"/>
    <property type="match status" value="1"/>
</dbReference>
<dbReference type="InterPro" id="IPR003758">
    <property type="entry name" value="LpxK"/>
</dbReference>
<dbReference type="InterPro" id="IPR027417">
    <property type="entry name" value="P-loop_NTPase"/>
</dbReference>
<dbReference type="NCBIfam" id="TIGR00682">
    <property type="entry name" value="lpxK"/>
    <property type="match status" value="1"/>
</dbReference>
<dbReference type="PANTHER" id="PTHR42724">
    <property type="entry name" value="TETRAACYLDISACCHARIDE 4'-KINASE"/>
    <property type="match status" value="1"/>
</dbReference>
<dbReference type="PANTHER" id="PTHR42724:SF1">
    <property type="entry name" value="TETRAACYLDISACCHARIDE 4'-KINASE, MITOCHONDRIAL-RELATED"/>
    <property type="match status" value="1"/>
</dbReference>
<dbReference type="Pfam" id="PF02606">
    <property type="entry name" value="LpxK"/>
    <property type="match status" value="1"/>
</dbReference>
<dbReference type="SUPFAM" id="SSF52540">
    <property type="entry name" value="P-loop containing nucleoside triphosphate hydrolases"/>
    <property type="match status" value="1"/>
</dbReference>
<sequence>MIARIWSGESPLWRLLLPLSWLYGLVSGAIRLSYKLGLKRAWRAPVPVVVVGNLTAGGNGKTPVVIWLVEKLQQRGVRVGVVSRGYGGKAAAYPLLLTPETTTAEAGDEPVLIYQRTGAPVAVAPERAAAVKAILAAHNVQIIITDDGLQHYRLARDIEIVVIDGVRRFGNGWWLPAGPMRERASRLKTVDAAIVNGGVARAGEIPMQLAPGLAVNLRTGARCDVAQLSNIVAMAGIGHPPRFFATLEACGAHPQKCVPLADHQTLAPADVQALVGEGQTLVMTEKDAVKCRAFAEDNWWFLPVDARLSGEQPDKLLEHITSLVR</sequence>
<protein>
    <recommendedName>
        <fullName evidence="1">Tetraacyldisaccharide 4'-kinase</fullName>
        <ecNumber evidence="1">2.7.1.130</ecNumber>
    </recommendedName>
    <alternativeName>
        <fullName evidence="1">Lipid A 4'-kinase</fullName>
    </alternativeName>
</protein>
<evidence type="ECO:0000255" key="1">
    <source>
        <dbReference type="HAMAP-Rule" id="MF_00409"/>
    </source>
</evidence>
<proteinExistence type="inferred from homology"/>
<keyword id="KW-0067">ATP-binding</keyword>
<keyword id="KW-0418">Kinase</keyword>
<keyword id="KW-0441">Lipid A biosynthesis</keyword>
<keyword id="KW-0444">Lipid biosynthesis</keyword>
<keyword id="KW-0443">Lipid metabolism</keyword>
<keyword id="KW-0547">Nucleotide-binding</keyword>
<keyword id="KW-0808">Transferase</keyword>